<reference key="1">
    <citation type="journal article" date="2001" name="Proc. Natl. Acad. Sci. U.S.A.">
        <title>Analysis of the chromosome sequence of the legume symbiont Sinorhizobium meliloti strain 1021.</title>
        <authorList>
            <person name="Capela D."/>
            <person name="Barloy-Hubler F."/>
            <person name="Gouzy J."/>
            <person name="Bothe G."/>
            <person name="Ampe F."/>
            <person name="Batut J."/>
            <person name="Boistard P."/>
            <person name="Becker A."/>
            <person name="Boutry M."/>
            <person name="Cadieu E."/>
            <person name="Dreano S."/>
            <person name="Gloux S."/>
            <person name="Godrie T."/>
            <person name="Goffeau A."/>
            <person name="Kahn D."/>
            <person name="Kiss E."/>
            <person name="Lelaure V."/>
            <person name="Masuy D."/>
            <person name="Pohl T."/>
            <person name="Portetelle D."/>
            <person name="Puehler A."/>
            <person name="Purnelle B."/>
            <person name="Ramsperger U."/>
            <person name="Renard C."/>
            <person name="Thebault P."/>
            <person name="Vandenbol M."/>
            <person name="Weidner S."/>
            <person name="Galibert F."/>
        </authorList>
    </citation>
    <scope>NUCLEOTIDE SEQUENCE [LARGE SCALE GENOMIC DNA]</scope>
    <source>
        <strain>1021</strain>
    </source>
</reference>
<reference key="2">
    <citation type="journal article" date="2001" name="Science">
        <title>The composite genome of the legume symbiont Sinorhizobium meliloti.</title>
        <authorList>
            <person name="Galibert F."/>
            <person name="Finan T.M."/>
            <person name="Long S.R."/>
            <person name="Puehler A."/>
            <person name="Abola P."/>
            <person name="Ampe F."/>
            <person name="Barloy-Hubler F."/>
            <person name="Barnett M.J."/>
            <person name="Becker A."/>
            <person name="Boistard P."/>
            <person name="Bothe G."/>
            <person name="Boutry M."/>
            <person name="Bowser L."/>
            <person name="Buhrmester J."/>
            <person name="Cadieu E."/>
            <person name="Capela D."/>
            <person name="Chain P."/>
            <person name="Cowie A."/>
            <person name="Davis R.W."/>
            <person name="Dreano S."/>
            <person name="Federspiel N.A."/>
            <person name="Fisher R.F."/>
            <person name="Gloux S."/>
            <person name="Godrie T."/>
            <person name="Goffeau A."/>
            <person name="Golding B."/>
            <person name="Gouzy J."/>
            <person name="Gurjal M."/>
            <person name="Hernandez-Lucas I."/>
            <person name="Hong A."/>
            <person name="Huizar L."/>
            <person name="Hyman R.W."/>
            <person name="Jones T."/>
            <person name="Kahn D."/>
            <person name="Kahn M.L."/>
            <person name="Kalman S."/>
            <person name="Keating D.H."/>
            <person name="Kiss E."/>
            <person name="Komp C."/>
            <person name="Lelaure V."/>
            <person name="Masuy D."/>
            <person name="Palm C."/>
            <person name="Peck M.C."/>
            <person name="Pohl T.M."/>
            <person name="Portetelle D."/>
            <person name="Purnelle B."/>
            <person name="Ramsperger U."/>
            <person name="Surzycki R."/>
            <person name="Thebault P."/>
            <person name="Vandenbol M."/>
            <person name="Vorhoelter F.J."/>
            <person name="Weidner S."/>
            <person name="Wells D.H."/>
            <person name="Wong K."/>
            <person name="Yeh K.-C."/>
            <person name="Batut J."/>
        </authorList>
    </citation>
    <scope>NUCLEOTIDE SEQUENCE [LARGE SCALE GENOMIC DNA]</scope>
    <source>
        <strain>1021</strain>
    </source>
</reference>
<dbReference type="EMBL" id="AL591688">
    <property type="protein sequence ID" value="CAC46043.2"/>
    <property type="molecule type" value="Genomic_DNA"/>
</dbReference>
<dbReference type="RefSeq" id="NP_385570.2">
    <property type="nucleotide sequence ID" value="NC_003047.1"/>
</dbReference>
<dbReference type="RefSeq" id="WP_003535434.1">
    <property type="nucleotide sequence ID" value="NC_003047.1"/>
</dbReference>
<dbReference type="SMR" id="Q92Q84"/>
<dbReference type="EnsemblBacteria" id="CAC46043">
    <property type="protein sequence ID" value="CAC46043"/>
    <property type="gene ID" value="SMc01048"/>
</dbReference>
<dbReference type="GeneID" id="89575788"/>
<dbReference type="KEGG" id="sme:SMc01048"/>
<dbReference type="PATRIC" id="fig|266834.11.peg.2883"/>
<dbReference type="eggNOG" id="COG1923">
    <property type="taxonomic scope" value="Bacteria"/>
</dbReference>
<dbReference type="HOGENOM" id="CLU_113688_0_0_5"/>
<dbReference type="OrthoDB" id="9799751at2"/>
<dbReference type="PRO" id="PR:Q92Q84"/>
<dbReference type="Proteomes" id="UP000001976">
    <property type="component" value="Chromosome"/>
</dbReference>
<dbReference type="GO" id="GO:0005829">
    <property type="term" value="C:cytosol"/>
    <property type="evidence" value="ECO:0007669"/>
    <property type="project" value="TreeGrafter"/>
</dbReference>
<dbReference type="GO" id="GO:0003723">
    <property type="term" value="F:RNA binding"/>
    <property type="evidence" value="ECO:0007669"/>
    <property type="project" value="UniProtKB-UniRule"/>
</dbReference>
<dbReference type="GO" id="GO:0006355">
    <property type="term" value="P:regulation of DNA-templated transcription"/>
    <property type="evidence" value="ECO:0007669"/>
    <property type="project" value="InterPro"/>
</dbReference>
<dbReference type="GO" id="GO:0043487">
    <property type="term" value="P:regulation of RNA stability"/>
    <property type="evidence" value="ECO:0007669"/>
    <property type="project" value="TreeGrafter"/>
</dbReference>
<dbReference type="GO" id="GO:0045974">
    <property type="term" value="P:regulation of translation, ncRNA-mediated"/>
    <property type="evidence" value="ECO:0007669"/>
    <property type="project" value="TreeGrafter"/>
</dbReference>
<dbReference type="CDD" id="cd01716">
    <property type="entry name" value="Hfq"/>
    <property type="match status" value="1"/>
</dbReference>
<dbReference type="Gene3D" id="2.30.30.100">
    <property type="match status" value="1"/>
</dbReference>
<dbReference type="HAMAP" id="MF_00436">
    <property type="entry name" value="Hfq"/>
    <property type="match status" value="1"/>
</dbReference>
<dbReference type="InterPro" id="IPR005001">
    <property type="entry name" value="Hfq"/>
</dbReference>
<dbReference type="InterPro" id="IPR010920">
    <property type="entry name" value="LSM_dom_sf"/>
</dbReference>
<dbReference type="InterPro" id="IPR047575">
    <property type="entry name" value="Sm"/>
</dbReference>
<dbReference type="NCBIfam" id="TIGR02383">
    <property type="entry name" value="Hfq"/>
    <property type="match status" value="1"/>
</dbReference>
<dbReference type="NCBIfam" id="NF001602">
    <property type="entry name" value="PRK00395.1"/>
    <property type="match status" value="1"/>
</dbReference>
<dbReference type="PANTHER" id="PTHR34772">
    <property type="entry name" value="RNA-BINDING PROTEIN HFQ"/>
    <property type="match status" value="1"/>
</dbReference>
<dbReference type="PANTHER" id="PTHR34772:SF1">
    <property type="entry name" value="RNA-BINDING PROTEIN HFQ"/>
    <property type="match status" value="1"/>
</dbReference>
<dbReference type="Pfam" id="PF17209">
    <property type="entry name" value="Hfq"/>
    <property type="match status" value="1"/>
</dbReference>
<dbReference type="SUPFAM" id="SSF50182">
    <property type="entry name" value="Sm-like ribonucleoproteins"/>
    <property type="match status" value="1"/>
</dbReference>
<dbReference type="PROSITE" id="PS52002">
    <property type="entry name" value="SM"/>
    <property type="match status" value="1"/>
</dbReference>
<keyword id="KW-1185">Reference proteome</keyword>
<keyword id="KW-0694">RNA-binding</keyword>
<keyword id="KW-0346">Stress response</keyword>
<protein>
    <recommendedName>
        <fullName evidence="1">RNA-binding protein Hfq</fullName>
    </recommendedName>
</protein>
<evidence type="ECO:0000255" key="1">
    <source>
        <dbReference type="HAMAP-Rule" id="MF_00436"/>
    </source>
</evidence>
<evidence type="ECO:0000255" key="2">
    <source>
        <dbReference type="PROSITE-ProRule" id="PRU01346"/>
    </source>
</evidence>
<name>HFQ_RHIME</name>
<gene>
    <name evidence="1" type="primary">hfq</name>
    <name type="ordered locus">R01464</name>
    <name type="ORF">SMc01048</name>
</gene>
<feature type="chain" id="PRO_1000190349" description="RNA-binding protein Hfq">
    <location>
        <begin position="1"/>
        <end position="80"/>
    </location>
</feature>
<feature type="domain" description="Sm" evidence="2">
    <location>
        <begin position="10"/>
        <end position="70"/>
    </location>
</feature>
<sequence length="80" mass="9053">MAERSQNLQDLFLNTVRKQKISLTIFLINGVKLTGVVTSFDNFCVLLRRDGHSQLVYKHAISTIMPGQPLQMFENEEAAS</sequence>
<proteinExistence type="inferred from homology"/>
<accession>Q92Q84</accession>
<comment type="function">
    <text evidence="1">RNA chaperone that binds small regulatory RNA (sRNAs) and mRNAs to facilitate mRNA translational regulation in response to envelope stress, environmental stress and changes in metabolite concentrations. Also binds with high specificity to tRNAs.</text>
</comment>
<comment type="subunit">
    <text evidence="1">Homohexamer.</text>
</comment>
<comment type="similarity">
    <text evidence="1">Belongs to the Hfq family.</text>
</comment>
<organism>
    <name type="scientific">Rhizobium meliloti (strain 1021)</name>
    <name type="common">Ensifer meliloti</name>
    <name type="synonym">Sinorhizobium meliloti</name>
    <dbReference type="NCBI Taxonomy" id="266834"/>
    <lineage>
        <taxon>Bacteria</taxon>
        <taxon>Pseudomonadati</taxon>
        <taxon>Pseudomonadota</taxon>
        <taxon>Alphaproteobacteria</taxon>
        <taxon>Hyphomicrobiales</taxon>
        <taxon>Rhizobiaceae</taxon>
        <taxon>Sinorhizobium/Ensifer group</taxon>
        <taxon>Sinorhizobium</taxon>
    </lineage>
</organism>